<gene>
    <name evidence="1" type="primary">xerS</name>
    <name type="ordered locus">SPCG_1138</name>
</gene>
<accession>B2IPW6</accession>
<organism>
    <name type="scientific">Streptococcus pneumoniae (strain CGSP14)</name>
    <dbReference type="NCBI Taxonomy" id="516950"/>
    <lineage>
        <taxon>Bacteria</taxon>
        <taxon>Bacillati</taxon>
        <taxon>Bacillota</taxon>
        <taxon>Bacilli</taxon>
        <taxon>Lactobacillales</taxon>
        <taxon>Streptococcaceae</taxon>
        <taxon>Streptococcus</taxon>
    </lineage>
</organism>
<reference key="1">
    <citation type="journal article" date="2009" name="BMC Genomics">
        <title>Genome evolution driven by host adaptations results in a more virulent and antimicrobial-resistant Streptococcus pneumoniae serotype 14.</title>
        <authorList>
            <person name="Ding F."/>
            <person name="Tang P."/>
            <person name="Hsu M.-H."/>
            <person name="Cui P."/>
            <person name="Hu S."/>
            <person name="Yu J."/>
            <person name="Chiu C.-H."/>
        </authorList>
    </citation>
    <scope>NUCLEOTIDE SEQUENCE [LARGE SCALE GENOMIC DNA]</scope>
    <source>
        <strain>CGSP14</strain>
    </source>
</reference>
<comment type="function">
    <text evidence="1">Site-specific tyrosine recombinase, which acts by catalyzing the cutting and rejoining of the recombining DNA molecules. Essential to convert dimers of the bacterial chromosome into monomers to permit their segregation at cell division.</text>
</comment>
<comment type="activity regulation">
    <text evidence="1">FtsK is required for recombination.</text>
</comment>
<comment type="subcellular location">
    <subcellularLocation>
        <location evidence="1">Cytoplasm</location>
    </subcellularLocation>
</comment>
<comment type="similarity">
    <text evidence="1">Belongs to the 'phage' integrase family. XerS subfamily.</text>
</comment>
<protein>
    <recommendedName>
        <fullName evidence="1">Tyrosine recombinase XerS</fullName>
    </recommendedName>
</protein>
<dbReference type="EMBL" id="CP001033">
    <property type="protein sequence ID" value="ACB90390.1"/>
    <property type="molecule type" value="Genomic_DNA"/>
</dbReference>
<dbReference type="RefSeq" id="WP_000817882.1">
    <property type="nucleotide sequence ID" value="NC_010582.1"/>
</dbReference>
<dbReference type="SMR" id="B2IPW6"/>
<dbReference type="KEGG" id="spw:SPCG_1138"/>
<dbReference type="HOGENOM" id="CLU_027562_9_6_9"/>
<dbReference type="GO" id="GO:0005737">
    <property type="term" value="C:cytoplasm"/>
    <property type="evidence" value="ECO:0007669"/>
    <property type="project" value="UniProtKB-SubCell"/>
</dbReference>
<dbReference type="GO" id="GO:0003677">
    <property type="term" value="F:DNA binding"/>
    <property type="evidence" value="ECO:0007669"/>
    <property type="project" value="UniProtKB-KW"/>
</dbReference>
<dbReference type="GO" id="GO:0009037">
    <property type="term" value="F:tyrosine-based site-specific recombinase activity"/>
    <property type="evidence" value="ECO:0007669"/>
    <property type="project" value="UniProtKB-UniRule"/>
</dbReference>
<dbReference type="GO" id="GO:0051301">
    <property type="term" value="P:cell division"/>
    <property type="evidence" value="ECO:0007669"/>
    <property type="project" value="UniProtKB-KW"/>
</dbReference>
<dbReference type="GO" id="GO:0007059">
    <property type="term" value="P:chromosome segregation"/>
    <property type="evidence" value="ECO:0007669"/>
    <property type="project" value="UniProtKB-UniRule"/>
</dbReference>
<dbReference type="GO" id="GO:0006310">
    <property type="term" value="P:DNA recombination"/>
    <property type="evidence" value="ECO:0007669"/>
    <property type="project" value="UniProtKB-UniRule"/>
</dbReference>
<dbReference type="Gene3D" id="1.10.150.130">
    <property type="match status" value="1"/>
</dbReference>
<dbReference type="Gene3D" id="1.10.443.10">
    <property type="entry name" value="Intergrase catalytic core"/>
    <property type="match status" value="1"/>
</dbReference>
<dbReference type="HAMAP" id="MF_01816">
    <property type="entry name" value="Recomb_XerS"/>
    <property type="match status" value="1"/>
</dbReference>
<dbReference type="InterPro" id="IPR044068">
    <property type="entry name" value="CB"/>
</dbReference>
<dbReference type="InterPro" id="IPR011010">
    <property type="entry name" value="DNA_brk_join_enz"/>
</dbReference>
<dbReference type="InterPro" id="IPR013762">
    <property type="entry name" value="Integrase-like_cat_sf"/>
</dbReference>
<dbReference type="InterPro" id="IPR002104">
    <property type="entry name" value="Integrase_catalytic"/>
</dbReference>
<dbReference type="InterPro" id="IPR010998">
    <property type="entry name" value="Integrase_recombinase_N"/>
</dbReference>
<dbReference type="InterPro" id="IPR004107">
    <property type="entry name" value="Integrase_SAM-like_N"/>
</dbReference>
<dbReference type="InterPro" id="IPR023670">
    <property type="entry name" value="Recomb_XerS"/>
</dbReference>
<dbReference type="InterPro" id="IPR050090">
    <property type="entry name" value="Tyrosine_recombinase_XerCD"/>
</dbReference>
<dbReference type="NCBIfam" id="NF003462">
    <property type="entry name" value="PRK05084.1"/>
    <property type="match status" value="1"/>
</dbReference>
<dbReference type="PANTHER" id="PTHR30349">
    <property type="entry name" value="PHAGE INTEGRASE-RELATED"/>
    <property type="match status" value="1"/>
</dbReference>
<dbReference type="PANTHER" id="PTHR30349:SF77">
    <property type="entry name" value="TYROSINE RECOMBINASE XERC"/>
    <property type="match status" value="1"/>
</dbReference>
<dbReference type="Pfam" id="PF02899">
    <property type="entry name" value="Phage_int_SAM_1"/>
    <property type="match status" value="1"/>
</dbReference>
<dbReference type="Pfam" id="PF00589">
    <property type="entry name" value="Phage_integrase"/>
    <property type="match status" value="1"/>
</dbReference>
<dbReference type="SUPFAM" id="SSF56349">
    <property type="entry name" value="DNA breaking-rejoining enzymes"/>
    <property type="match status" value="1"/>
</dbReference>
<dbReference type="PROSITE" id="PS51900">
    <property type="entry name" value="CB"/>
    <property type="match status" value="1"/>
</dbReference>
<dbReference type="PROSITE" id="PS51898">
    <property type="entry name" value="TYR_RECOMBINASE"/>
    <property type="match status" value="1"/>
</dbReference>
<name>XERS_STRPS</name>
<keyword id="KW-0131">Cell cycle</keyword>
<keyword id="KW-0132">Cell division</keyword>
<keyword id="KW-0159">Chromosome partition</keyword>
<keyword id="KW-0963">Cytoplasm</keyword>
<keyword id="KW-0229">DNA integration</keyword>
<keyword id="KW-0233">DNA recombination</keyword>
<keyword id="KW-0238">DNA-binding</keyword>
<proteinExistence type="inferred from homology"/>
<feature type="chain" id="PRO_0000372669" description="Tyrosine recombinase XerS">
    <location>
        <begin position="1"/>
        <end position="356"/>
    </location>
</feature>
<feature type="domain" description="Core-binding (CB)" evidence="3">
    <location>
        <begin position="16"/>
        <end position="121"/>
    </location>
</feature>
<feature type="domain" description="Tyr recombinase" evidence="2">
    <location>
        <begin position="169"/>
        <end position="354"/>
    </location>
</feature>
<feature type="active site" evidence="1">
    <location>
        <position position="210"/>
    </location>
</feature>
<feature type="active site" evidence="1">
    <location>
        <position position="234"/>
    </location>
</feature>
<feature type="active site" evidence="1">
    <location>
        <position position="306"/>
    </location>
</feature>
<feature type="active site" evidence="1">
    <location>
        <position position="309"/>
    </location>
</feature>
<feature type="active site" evidence="1">
    <location>
        <position position="332"/>
    </location>
</feature>
<feature type="active site" description="O-(3'-phospho-DNA)-tyrosine intermediate" evidence="1">
    <location>
        <position position="341"/>
    </location>
</feature>
<evidence type="ECO:0000255" key="1">
    <source>
        <dbReference type="HAMAP-Rule" id="MF_01816"/>
    </source>
</evidence>
<evidence type="ECO:0000255" key="2">
    <source>
        <dbReference type="PROSITE-ProRule" id="PRU01246"/>
    </source>
</evidence>
<evidence type="ECO:0000255" key="3">
    <source>
        <dbReference type="PROSITE-ProRule" id="PRU01248"/>
    </source>
</evidence>
<sequence>MKREILLERIDKLKQLMPWYVLEYYQSKLAVPYSFTTLYEYLKEYDRFFSWVLESGISNADKISDIPLSVLENMSKKDMESFILYLRERPLLNANTTKQGVSQTTINRTLSALSSLYKYLTEEVENDQGEPYFYRNVMKKVSTKKKKETLAARAENIKQKLFLGDETEGFLTYIDQEHPQQLSNRALSSFNKNKERDLAIIALLLASGVRLSEAVNLDLRDLNLKMMVIDVTRKGGKRDSVNVAAFAKPYLENYLAIRNQRYKTEKTDTALFLTLYRGVPNRIDASSVEKMVAKYSEDFKVRVTPHKLRHTLATRLYDATKSQVLVSHQLGHASTQVTDLYTHIVNDEQKNALDSL</sequence>